<name>THIC_CARHZ</name>
<organism>
    <name type="scientific">Carboxydothermus hydrogenoformans (strain ATCC BAA-161 / DSM 6008 / Z-2901)</name>
    <dbReference type="NCBI Taxonomy" id="246194"/>
    <lineage>
        <taxon>Bacteria</taxon>
        <taxon>Bacillati</taxon>
        <taxon>Bacillota</taxon>
        <taxon>Clostridia</taxon>
        <taxon>Thermoanaerobacterales</taxon>
        <taxon>Thermoanaerobacteraceae</taxon>
        <taxon>Carboxydothermus</taxon>
    </lineage>
</organism>
<evidence type="ECO:0000255" key="1">
    <source>
        <dbReference type="HAMAP-Rule" id="MF_00089"/>
    </source>
</evidence>
<accession>Q3AE33</accession>
<keyword id="KW-0004">4Fe-4S</keyword>
<keyword id="KW-0408">Iron</keyword>
<keyword id="KW-0411">Iron-sulfur</keyword>
<keyword id="KW-0456">Lyase</keyword>
<keyword id="KW-0479">Metal-binding</keyword>
<keyword id="KW-1185">Reference proteome</keyword>
<keyword id="KW-0949">S-adenosyl-L-methionine</keyword>
<keyword id="KW-0784">Thiamine biosynthesis</keyword>
<keyword id="KW-0862">Zinc</keyword>
<proteinExistence type="inferred from homology"/>
<dbReference type="EC" id="4.1.99.17" evidence="1"/>
<dbReference type="EMBL" id="CP000141">
    <property type="protein sequence ID" value="ABB14730.1"/>
    <property type="molecule type" value="Genomic_DNA"/>
</dbReference>
<dbReference type="RefSeq" id="WP_011343677.1">
    <property type="nucleotide sequence ID" value="NC_007503.1"/>
</dbReference>
<dbReference type="SMR" id="Q3AE33"/>
<dbReference type="FunCoup" id="Q3AE33">
    <property type="interactions" value="361"/>
</dbReference>
<dbReference type="STRING" id="246194.CHY_0747"/>
<dbReference type="KEGG" id="chy:CHY_0747"/>
<dbReference type="eggNOG" id="COG0422">
    <property type="taxonomic scope" value="Bacteria"/>
</dbReference>
<dbReference type="HOGENOM" id="CLU_013181_2_2_9"/>
<dbReference type="InParanoid" id="Q3AE33"/>
<dbReference type="OrthoDB" id="9805897at2"/>
<dbReference type="UniPathway" id="UPA00060"/>
<dbReference type="Proteomes" id="UP000002706">
    <property type="component" value="Chromosome"/>
</dbReference>
<dbReference type="GO" id="GO:0005829">
    <property type="term" value="C:cytosol"/>
    <property type="evidence" value="ECO:0007669"/>
    <property type="project" value="TreeGrafter"/>
</dbReference>
<dbReference type="GO" id="GO:0051539">
    <property type="term" value="F:4 iron, 4 sulfur cluster binding"/>
    <property type="evidence" value="ECO:0007669"/>
    <property type="project" value="UniProtKB-KW"/>
</dbReference>
<dbReference type="GO" id="GO:0016830">
    <property type="term" value="F:carbon-carbon lyase activity"/>
    <property type="evidence" value="ECO:0007669"/>
    <property type="project" value="InterPro"/>
</dbReference>
<dbReference type="GO" id="GO:0008270">
    <property type="term" value="F:zinc ion binding"/>
    <property type="evidence" value="ECO:0007669"/>
    <property type="project" value="UniProtKB-UniRule"/>
</dbReference>
<dbReference type="GO" id="GO:0009228">
    <property type="term" value="P:thiamine biosynthetic process"/>
    <property type="evidence" value="ECO:0007669"/>
    <property type="project" value="UniProtKB-KW"/>
</dbReference>
<dbReference type="GO" id="GO:0009229">
    <property type="term" value="P:thiamine diphosphate biosynthetic process"/>
    <property type="evidence" value="ECO:0007669"/>
    <property type="project" value="UniProtKB-UniRule"/>
</dbReference>
<dbReference type="FunFam" id="3.20.20.540:FF:000001">
    <property type="entry name" value="Phosphomethylpyrimidine synthase"/>
    <property type="match status" value="1"/>
</dbReference>
<dbReference type="Gene3D" id="6.10.250.620">
    <property type="match status" value="1"/>
</dbReference>
<dbReference type="Gene3D" id="3.20.20.540">
    <property type="entry name" value="Radical SAM ThiC family, central domain"/>
    <property type="match status" value="1"/>
</dbReference>
<dbReference type="HAMAP" id="MF_00089">
    <property type="entry name" value="ThiC"/>
    <property type="match status" value="1"/>
</dbReference>
<dbReference type="InterPro" id="IPR037509">
    <property type="entry name" value="ThiC"/>
</dbReference>
<dbReference type="InterPro" id="IPR038521">
    <property type="entry name" value="ThiC/Bza_core_dom"/>
</dbReference>
<dbReference type="InterPro" id="IPR002817">
    <property type="entry name" value="ThiC/BzaA/B"/>
</dbReference>
<dbReference type="NCBIfam" id="NF009895">
    <property type="entry name" value="PRK13352.1"/>
    <property type="match status" value="1"/>
</dbReference>
<dbReference type="NCBIfam" id="TIGR00190">
    <property type="entry name" value="thiC"/>
    <property type="match status" value="1"/>
</dbReference>
<dbReference type="PANTHER" id="PTHR30557:SF1">
    <property type="entry name" value="PHOSPHOMETHYLPYRIMIDINE SYNTHASE, CHLOROPLASTIC"/>
    <property type="match status" value="1"/>
</dbReference>
<dbReference type="PANTHER" id="PTHR30557">
    <property type="entry name" value="THIAMINE BIOSYNTHESIS PROTEIN THIC"/>
    <property type="match status" value="1"/>
</dbReference>
<dbReference type="Pfam" id="PF01964">
    <property type="entry name" value="ThiC_Rad_SAM"/>
    <property type="match status" value="1"/>
</dbReference>
<dbReference type="SFLD" id="SFLDF00407">
    <property type="entry name" value="phosphomethylpyrimidine_syntha"/>
    <property type="match status" value="1"/>
</dbReference>
<dbReference type="SFLD" id="SFLDG01114">
    <property type="entry name" value="phosphomethylpyrimidine_syntha"/>
    <property type="match status" value="1"/>
</dbReference>
<dbReference type="SFLD" id="SFLDS00113">
    <property type="entry name" value="Radical_SAM_Phosphomethylpyrim"/>
    <property type="match status" value="1"/>
</dbReference>
<comment type="function">
    <text evidence="1">Catalyzes the synthesis of the hydroxymethylpyrimidine phosphate (HMP-P) moiety of thiamine from aminoimidazole ribotide (AIR) in a radical S-adenosyl-L-methionine (SAM)-dependent reaction.</text>
</comment>
<comment type="catalytic activity">
    <reaction evidence="1">
        <text>5-amino-1-(5-phospho-beta-D-ribosyl)imidazole + S-adenosyl-L-methionine = 4-amino-2-methyl-5-(phosphooxymethyl)pyrimidine + CO + 5'-deoxyadenosine + formate + L-methionine + 3 H(+)</text>
        <dbReference type="Rhea" id="RHEA:24840"/>
        <dbReference type="ChEBI" id="CHEBI:15378"/>
        <dbReference type="ChEBI" id="CHEBI:15740"/>
        <dbReference type="ChEBI" id="CHEBI:17245"/>
        <dbReference type="ChEBI" id="CHEBI:17319"/>
        <dbReference type="ChEBI" id="CHEBI:57844"/>
        <dbReference type="ChEBI" id="CHEBI:58354"/>
        <dbReference type="ChEBI" id="CHEBI:59789"/>
        <dbReference type="ChEBI" id="CHEBI:137981"/>
        <dbReference type="EC" id="4.1.99.17"/>
    </reaction>
</comment>
<comment type="cofactor">
    <cofactor evidence="1">
        <name>[4Fe-4S] cluster</name>
        <dbReference type="ChEBI" id="CHEBI:49883"/>
    </cofactor>
    <text evidence="1">Binds 1 [4Fe-4S] cluster per subunit. The cluster is coordinated with 3 cysteines and an exchangeable S-adenosyl-L-methionine.</text>
</comment>
<comment type="pathway">
    <text evidence="1">Cofactor biosynthesis; thiamine diphosphate biosynthesis.</text>
</comment>
<comment type="similarity">
    <text evidence="1">Belongs to the ThiC family.</text>
</comment>
<sequence length="429" mass="47317">MTQLLKAKEGVITREMEVVAAEERKSPEEIRQKVALGEVVIPANVNHQNLHPKGIGAGLKVKVNANLGTSENRCFYEDELKKVKVAIKAGADAIMDLSTGGNLDEIRRAIIKESSVPVGTVPLYQAAAETLNKYGDISRLDPELLFDVIEKQAADGVDFMTVHVGVTREILKVLDRFPRVTEVVSRGGSLTIAWMEKNGRENPLYEQFDRLLAICRKYDVTLSLGDGLRPGSIADATDQLQIMELMKLGELVKYAQNQGVQVMVEGPGHVPINQIEMNVKLMKRLCANAPFYVLGPLVTDIAPGYDHITAAIGGAWAAYFGADFLCYVTPAEHLGLPTVEDVEEGVIALKIAAHAADLARGNREAWNRDYEMSVARKELNWERQFELAINPERARKMRIERGSQDIKSCSMCGELCAMKIMNERGGKNA</sequence>
<protein>
    <recommendedName>
        <fullName evidence="1">Phosphomethylpyrimidine synthase</fullName>
        <ecNumber evidence="1">4.1.99.17</ecNumber>
    </recommendedName>
    <alternativeName>
        <fullName evidence="1">Hydroxymethylpyrimidine phosphate synthase</fullName>
        <shortName evidence="1">HMP-P synthase</shortName>
        <shortName evidence="1">HMP-phosphate synthase</shortName>
        <shortName evidence="1">HMPP synthase</shortName>
    </alternativeName>
    <alternativeName>
        <fullName evidence="1">Thiamine biosynthesis protein ThiC</fullName>
    </alternativeName>
</protein>
<gene>
    <name evidence="1" type="primary">thiC</name>
    <name type="ordered locus">CHY_0747</name>
</gene>
<reference key="1">
    <citation type="journal article" date="2005" name="PLoS Genet.">
        <title>Life in hot carbon monoxide: the complete genome sequence of Carboxydothermus hydrogenoformans Z-2901.</title>
        <authorList>
            <person name="Wu M."/>
            <person name="Ren Q."/>
            <person name="Durkin A.S."/>
            <person name="Daugherty S.C."/>
            <person name="Brinkac L.M."/>
            <person name="Dodson R.J."/>
            <person name="Madupu R."/>
            <person name="Sullivan S.A."/>
            <person name="Kolonay J.F."/>
            <person name="Nelson W.C."/>
            <person name="Tallon L.J."/>
            <person name="Jones K.M."/>
            <person name="Ulrich L.E."/>
            <person name="Gonzalez J.M."/>
            <person name="Zhulin I.B."/>
            <person name="Robb F.T."/>
            <person name="Eisen J.A."/>
        </authorList>
    </citation>
    <scope>NUCLEOTIDE SEQUENCE [LARGE SCALE GENOMIC DNA]</scope>
    <source>
        <strain>ATCC BAA-161 / DSM 6008 / Z-2901</strain>
    </source>
</reference>
<feature type="chain" id="PRO_0000242250" description="Phosphomethylpyrimidine synthase">
    <location>
        <begin position="1"/>
        <end position="429"/>
    </location>
</feature>
<feature type="binding site" evidence="1">
    <location>
        <position position="66"/>
    </location>
    <ligand>
        <name>substrate</name>
    </ligand>
</feature>
<feature type="binding site" evidence="1">
    <location>
        <position position="95"/>
    </location>
    <ligand>
        <name>substrate</name>
    </ligand>
</feature>
<feature type="binding site" evidence="1">
    <location>
        <position position="124"/>
    </location>
    <ligand>
        <name>substrate</name>
    </ligand>
</feature>
<feature type="binding site" evidence="1">
    <location>
        <position position="163"/>
    </location>
    <ligand>
        <name>substrate</name>
    </ligand>
</feature>
<feature type="binding site" evidence="1">
    <location>
        <begin position="185"/>
        <end position="187"/>
    </location>
    <ligand>
        <name>substrate</name>
    </ligand>
</feature>
<feature type="binding site" evidence="1">
    <location>
        <begin position="226"/>
        <end position="229"/>
    </location>
    <ligand>
        <name>substrate</name>
    </ligand>
</feature>
<feature type="binding site" evidence="1">
    <location>
        <position position="265"/>
    </location>
    <ligand>
        <name>substrate</name>
    </ligand>
</feature>
<feature type="binding site" evidence="1">
    <location>
        <position position="269"/>
    </location>
    <ligand>
        <name>Zn(2+)</name>
        <dbReference type="ChEBI" id="CHEBI:29105"/>
    </ligand>
</feature>
<feature type="binding site" evidence="1">
    <location>
        <position position="292"/>
    </location>
    <ligand>
        <name>substrate</name>
    </ligand>
</feature>
<feature type="binding site" evidence="1">
    <location>
        <position position="333"/>
    </location>
    <ligand>
        <name>Zn(2+)</name>
        <dbReference type="ChEBI" id="CHEBI:29105"/>
    </ligand>
</feature>
<feature type="binding site" evidence="1">
    <location>
        <position position="409"/>
    </location>
    <ligand>
        <name>[4Fe-4S] cluster</name>
        <dbReference type="ChEBI" id="CHEBI:49883"/>
        <note>4Fe-4S-S-AdoMet</note>
    </ligand>
</feature>
<feature type="binding site" evidence="1">
    <location>
        <position position="412"/>
    </location>
    <ligand>
        <name>[4Fe-4S] cluster</name>
        <dbReference type="ChEBI" id="CHEBI:49883"/>
        <note>4Fe-4S-S-AdoMet</note>
    </ligand>
</feature>
<feature type="binding site" evidence="1">
    <location>
        <position position="416"/>
    </location>
    <ligand>
        <name>[4Fe-4S] cluster</name>
        <dbReference type="ChEBI" id="CHEBI:49883"/>
        <note>4Fe-4S-S-AdoMet</note>
    </ligand>
</feature>